<sequence>MAKVKIGINGFGRIGRLVARVILQSDDCELVAINDPFITTDYMTYMFKYDSVHGQWKHHELKVKDEKTLLFGERPVTVFGNRNPEEIPWGQTGADYVVESTGVFTDKDKAAAHLKGGAKKVIISAPSKDAPMFVVGVNEHEYKSELNIVSNASCTTNCLAPLAKVINDKFGIVEGLMTTVHSITATQKTVDGPSAKDWRGGRAASFNIIPSSTGAAKAVGKVLPALNGKLTGMSFRVPTVDVSVVDLTVRLEKEATYEQIKAAIKEESEGKMKGILGYTEDDVVSTDFVGDNRSSIFDAKAGICLNGNFVKLVSWYDNEWGYSSRVVDLIRHMSKTTSKLDSVALACVDAVSTLILSSEC</sequence>
<accession>P34783</accession>
<dbReference type="EC" id="1.2.1.12"/>
<dbReference type="EMBL" id="U02886">
    <property type="protein sequence ID" value="AAA03442.1"/>
    <property type="molecule type" value="mRNA"/>
</dbReference>
<dbReference type="EMBL" id="X75597">
    <property type="protein sequence ID" value="CAA53269.1"/>
    <property type="molecule type" value="mRNA"/>
</dbReference>
<dbReference type="PIR" id="S38570">
    <property type="entry name" value="S38570"/>
</dbReference>
<dbReference type="SMR" id="P34783"/>
<dbReference type="UniPathway" id="UPA00109">
    <property type="reaction ID" value="UER00184"/>
</dbReference>
<dbReference type="GO" id="GO:0005829">
    <property type="term" value="C:cytosol"/>
    <property type="evidence" value="ECO:0007669"/>
    <property type="project" value="TreeGrafter"/>
</dbReference>
<dbReference type="GO" id="GO:0004365">
    <property type="term" value="F:glyceraldehyde-3-phosphate dehydrogenase (NAD+) (phosphorylating) activity"/>
    <property type="evidence" value="ECO:0007669"/>
    <property type="project" value="UniProtKB-EC"/>
</dbReference>
<dbReference type="GO" id="GO:0051287">
    <property type="term" value="F:NAD binding"/>
    <property type="evidence" value="ECO:0007669"/>
    <property type="project" value="InterPro"/>
</dbReference>
<dbReference type="GO" id="GO:0050661">
    <property type="term" value="F:NADP binding"/>
    <property type="evidence" value="ECO:0007669"/>
    <property type="project" value="InterPro"/>
</dbReference>
<dbReference type="GO" id="GO:0006006">
    <property type="term" value="P:glucose metabolic process"/>
    <property type="evidence" value="ECO:0007669"/>
    <property type="project" value="InterPro"/>
</dbReference>
<dbReference type="GO" id="GO:0006096">
    <property type="term" value="P:glycolytic process"/>
    <property type="evidence" value="ECO:0007669"/>
    <property type="project" value="UniProtKB-UniPathway"/>
</dbReference>
<dbReference type="CDD" id="cd18126">
    <property type="entry name" value="GAPDH_I_C"/>
    <property type="match status" value="1"/>
</dbReference>
<dbReference type="CDD" id="cd05214">
    <property type="entry name" value="GAPDH_I_N"/>
    <property type="match status" value="1"/>
</dbReference>
<dbReference type="FunFam" id="3.30.360.10:FF:000001">
    <property type="entry name" value="Glyceraldehyde-3-phosphate dehydrogenase"/>
    <property type="match status" value="1"/>
</dbReference>
<dbReference type="FunFam" id="3.40.50.720:FF:000020">
    <property type="entry name" value="Glyceraldehyde-3-phosphate dehydrogenase"/>
    <property type="match status" value="1"/>
</dbReference>
<dbReference type="Gene3D" id="3.30.360.10">
    <property type="entry name" value="Dihydrodipicolinate Reductase, domain 2"/>
    <property type="match status" value="1"/>
</dbReference>
<dbReference type="Gene3D" id="3.40.50.720">
    <property type="entry name" value="NAD(P)-binding Rossmann-like Domain"/>
    <property type="match status" value="1"/>
</dbReference>
<dbReference type="InterPro" id="IPR020831">
    <property type="entry name" value="GlycerAld/Erythrose_P_DH"/>
</dbReference>
<dbReference type="InterPro" id="IPR020830">
    <property type="entry name" value="GlycerAld_3-P_DH_AS"/>
</dbReference>
<dbReference type="InterPro" id="IPR020829">
    <property type="entry name" value="GlycerAld_3-P_DH_cat"/>
</dbReference>
<dbReference type="InterPro" id="IPR020828">
    <property type="entry name" value="GlycerAld_3-P_DH_NAD(P)-bd"/>
</dbReference>
<dbReference type="InterPro" id="IPR006424">
    <property type="entry name" value="Glyceraldehyde-3-P_DH_1"/>
</dbReference>
<dbReference type="InterPro" id="IPR036291">
    <property type="entry name" value="NAD(P)-bd_dom_sf"/>
</dbReference>
<dbReference type="NCBIfam" id="TIGR01534">
    <property type="entry name" value="GAPDH-I"/>
    <property type="match status" value="1"/>
</dbReference>
<dbReference type="PANTHER" id="PTHR10836">
    <property type="entry name" value="GLYCERALDEHYDE 3-PHOSPHATE DEHYDROGENASE"/>
    <property type="match status" value="1"/>
</dbReference>
<dbReference type="PANTHER" id="PTHR10836:SF112">
    <property type="entry name" value="GLYCERALDEHYDE-3-PHOSPHATE DEHYDROGENASE GAPC1, CYTOSOLIC-RELATED"/>
    <property type="match status" value="1"/>
</dbReference>
<dbReference type="Pfam" id="PF02800">
    <property type="entry name" value="Gp_dh_C"/>
    <property type="match status" value="1"/>
</dbReference>
<dbReference type="Pfam" id="PF00044">
    <property type="entry name" value="Gp_dh_N"/>
    <property type="match status" value="1"/>
</dbReference>
<dbReference type="PIRSF" id="PIRSF000149">
    <property type="entry name" value="GAP_DH"/>
    <property type="match status" value="1"/>
</dbReference>
<dbReference type="PRINTS" id="PR00078">
    <property type="entry name" value="G3PDHDRGNASE"/>
</dbReference>
<dbReference type="SMART" id="SM00846">
    <property type="entry name" value="Gp_dh_N"/>
    <property type="match status" value="1"/>
</dbReference>
<dbReference type="SUPFAM" id="SSF55347">
    <property type="entry name" value="Glyceraldehyde-3-phosphate dehydrogenase-like, C-terminal domain"/>
    <property type="match status" value="1"/>
</dbReference>
<dbReference type="SUPFAM" id="SSF51735">
    <property type="entry name" value="NAD(P)-binding Rossmann-fold domains"/>
    <property type="match status" value="1"/>
</dbReference>
<dbReference type="PROSITE" id="PS00071">
    <property type="entry name" value="GAPDH"/>
    <property type="match status" value="1"/>
</dbReference>
<reference key="1">
    <citation type="journal article" date="1994" name="Plant Physiol.">
        <title>Molecular cloning and expression of a glyceraldehyde-3-phosphate dehydrogenase gene in a desert halophyte, Atriplex nummularia L.</title>
        <authorList>
            <person name="Niu X."/>
            <person name="Wang H."/>
            <person name="Bressan R.A."/>
            <person name="Hasegawa P.M."/>
        </authorList>
    </citation>
    <scope>NUCLEOTIDE SEQUENCE [MRNA]</scope>
    <source>
        <tissue>Root</tissue>
    </source>
</reference>
<evidence type="ECO:0000250" key="1"/>
<evidence type="ECO:0000255" key="2">
    <source>
        <dbReference type="PROSITE-ProRule" id="PRU10009"/>
    </source>
</evidence>
<evidence type="ECO:0000305" key="3"/>
<comment type="function">
    <text evidence="1">Key enzyme in glycolysis that catalyzes the first step of the pathway by converting D-glyceraldehyde 3-phosphate (G3P) into 3-phospho-D-glyceroyl phosphate. Essential for the maintenance of cellular ATP levels and carbohydrate metabolism (By similarity).</text>
</comment>
<comment type="catalytic activity">
    <reaction evidence="2">
        <text>D-glyceraldehyde 3-phosphate + phosphate + NAD(+) = (2R)-3-phospho-glyceroyl phosphate + NADH + H(+)</text>
        <dbReference type="Rhea" id="RHEA:10300"/>
        <dbReference type="ChEBI" id="CHEBI:15378"/>
        <dbReference type="ChEBI" id="CHEBI:43474"/>
        <dbReference type="ChEBI" id="CHEBI:57540"/>
        <dbReference type="ChEBI" id="CHEBI:57604"/>
        <dbReference type="ChEBI" id="CHEBI:57945"/>
        <dbReference type="ChEBI" id="CHEBI:59776"/>
        <dbReference type="EC" id="1.2.1.12"/>
    </reaction>
</comment>
<comment type="pathway">
    <text>Carbohydrate degradation; glycolysis; pyruvate from D-glyceraldehyde 3-phosphate: step 1/5.</text>
</comment>
<comment type="subunit">
    <text evidence="1">Homotetramer.</text>
</comment>
<comment type="similarity">
    <text evidence="3">Belongs to the glyceraldehyde-3-phosphate dehydrogenase family.</text>
</comment>
<keyword id="KW-0324">Glycolysis</keyword>
<keyword id="KW-0520">NAD</keyword>
<keyword id="KW-0560">Oxidoreductase</keyword>
<feature type="chain" id="PRO_0000145595" description="Glyceraldehyde-3-phosphate dehydrogenase">
    <location>
        <begin position="1"/>
        <end position="360"/>
    </location>
</feature>
<feature type="active site" description="Nucleophile" evidence="2">
    <location>
        <position position="154"/>
    </location>
</feature>
<feature type="binding site" evidence="1">
    <location>
        <begin position="13"/>
        <end position="14"/>
    </location>
    <ligand>
        <name>NAD(+)</name>
        <dbReference type="ChEBI" id="CHEBI:57540"/>
    </ligand>
</feature>
<feature type="binding site" evidence="1">
    <location>
        <position position="35"/>
    </location>
    <ligand>
        <name>NAD(+)</name>
        <dbReference type="ChEBI" id="CHEBI:57540"/>
    </ligand>
</feature>
<feature type="binding site" evidence="1">
    <location>
        <position position="82"/>
    </location>
    <ligand>
        <name>NAD(+)</name>
        <dbReference type="ChEBI" id="CHEBI:57540"/>
    </ligand>
</feature>
<feature type="binding site" evidence="1">
    <location>
        <begin position="153"/>
        <end position="155"/>
    </location>
    <ligand>
        <name>D-glyceraldehyde 3-phosphate</name>
        <dbReference type="ChEBI" id="CHEBI:59776"/>
    </ligand>
</feature>
<feature type="binding site" evidence="1">
    <location>
        <position position="184"/>
    </location>
    <ligand>
        <name>D-glyceraldehyde 3-phosphate</name>
        <dbReference type="ChEBI" id="CHEBI:59776"/>
    </ligand>
</feature>
<feature type="binding site" evidence="1">
    <location>
        <begin position="213"/>
        <end position="214"/>
    </location>
    <ligand>
        <name>D-glyceraldehyde 3-phosphate</name>
        <dbReference type="ChEBI" id="CHEBI:59776"/>
    </ligand>
</feature>
<feature type="binding site" evidence="1">
    <location>
        <position position="236"/>
    </location>
    <ligand>
        <name>D-glyceraldehyde 3-phosphate</name>
        <dbReference type="ChEBI" id="CHEBI:59776"/>
    </ligand>
</feature>
<feature type="binding site" evidence="1">
    <location>
        <position position="318"/>
    </location>
    <ligand>
        <name>NAD(+)</name>
        <dbReference type="ChEBI" id="CHEBI:57540"/>
    </ligand>
</feature>
<feature type="site" description="Activates thiol group during catalysis" evidence="1">
    <location>
        <position position="181"/>
    </location>
</feature>
<name>G3P_ATRNU</name>
<organism>
    <name type="scientific">Atriplex nummularia</name>
    <name type="common">Old man saltbush</name>
    <name type="synonym">Atriplex johnstonii</name>
    <dbReference type="NCBI Taxonomy" id="3553"/>
    <lineage>
        <taxon>Eukaryota</taxon>
        <taxon>Viridiplantae</taxon>
        <taxon>Streptophyta</taxon>
        <taxon>Embryophyta</taxon>
        <taxon>Tracheophyta</taxon>
        <taxon>Spermatophyta</taxon>
        <taxon>Magnoliopsida</taxon>
        <taxon>eudicotyledons</taxon>
        <taxon>Gunneridae</taxon>
        <taxon>Pentapetalae</taxon>
        <taxon>Caryophyllales</taxon>
        <taxon>Chenopodiaceae</taxon>
        <taxon>Chenopodioideae</taxon>
        <taxon>Atripliceae</taxon>
        <taxon>Atriplex</taxon>
    </lineage>
</organism>
<protein>
    <recommendedName>
        <fullName>Glyceraldehyde-3-phosphate dehydrogenase</fullName>
        <shortName>GAPDH</shortName>
        <ecNumber>1.2.1.12</ecNumber>
    </recommendedName>
</protein>
<proteinExistence type="evidence at transcript level"/>